<organism>
    <name type="scientific">Bos taurus</name>
    <name type="common">Bovine</name>
    <dbReference type="NCBI Taxonomy" id="9913"/>
    <lineage>
        <taxon>Eukaryota</taxon>
        <taxon>Metazoa</taxon>
        <taxon>Chordata</taxon>
        <taxon>Craniata</taxon>
        <taxon>Vertebrata</taxon>
        <taxon>Euteleostomi</taxon>
        <taxon>Mammalia</taxon>
        <taxon>Eutheria</taxon>
        <taxon>Laurasiatheria</taxon>
        <taxon>Artiodactyla</taxon>
        <taxon>Ruminantia</taxon>
        <taxon>Pecora</taxon>
        <taxon>Bovidae</taxon>
        <taxon>Bovinae</taxon>
        <taxon>Bos</taxon>
    </lineage>
</organism>
<accession>Q1LZC9</accession>
<proteinExistence type="inferred from homology"/>
<comment type="function">
    <text evidence="1">Required for the first step of diphthamide biosynthesis, a post-translational modification of histidine which occurs in elongation factor 2. DPH1 and DPH2 transfer a 3-amino-3-carboxypropyl (ACP) group from S-adenosyl-L-methionine (SAM) to a histidine residue, the reaction is assisted by a reduction system comprising DPH3 and a NADH-dependent reductase. Acts as an electron donor to reduce the Fe-S cluster in DPH1-DPH2 keeping the [4Fe-4S] clusters in the active and reduced state. Restores iron to DPH1-DPH2 iron-sulfur clusters which have degraded from [4Fe-4S] to [3Fe-4S] by donating an iron atom to reform [4Fe-4S] clusters, in a manner dependent on the presence of elongation factor 2 and SAM. Associates with the elongator complex and is required for tRNA Wobble base modifications mediated by the elongator complex. The elongator complex is required for multiple tRNA modifications, including mcm5U (5-methoxycarbonylmethyl uridine), mcm5s 2U (5-methoxycarbonylmethyl-2-thiouridine), and ncm5U (5-carbamoylmethyl uridine).</text>
</comment>
<comment type="catalytic activity">
    <reaction evidence="1">
        <text>[3Fe-4S](1+)-[protein] + Fe(2+)-[Dph3] = [3Fe-4S](0)-[protein] + Fe(3+)-[Dph3]</text>
        <dbReference type="Rhea" id="RHEA:71235"/>
        <dbReference type="Rhea" id="RHEA-COMP:17996"/>
        <dbReference type="Rhea" id="RHEA-COMP:17997"/>
        <dbReference type="Rhea" id="RHEA-COMP:18002"/>
        <dbReference type="Rhea" id="RHEA-COMP:18003"/>
        <dbReference type="ChEBI" id="CHEBI:29033"/>
        <dbReference type="ChEBI" id="CHEBI:29034"/>
        <dbReference type="ChEBI" id="CHEBI:33751"/>
        <dbReference type="ChEBI" id="CHEBI:47402"/>
        <dbReference type="ChEBI" id="CHEBI:83228"/>
    </reaction>
</comment>
<comment type="catalytic activity">
    <reaction evidence="1">
        <text>2 [3Fe-4S](0)-[protein] + 2 Fe(2+)-[Dph3] + NADH = 2 [4Fe-4S](1+)-[protein] + 2 [Dph3] + NAD(+) + H(+)</text>
        <dbReference type="Rhea" id="RHEA:71239"/>
        <dbReference type="Rhea" id="RHEA-COMP:17997"/>
        <dbReference type="Rhea" id="RHEA-COMP:17998"/>
        <dbReference type="Rhea" id="RHEA-COMP:18001"/>
        <dbReference type="Rhea" id="RHEA-COMP:18002"/>
        <dbReference type="ChEBI" id="CHEBI:15378"/>
        <dbReference type="ChEBI" id="CHEBI:29033"/>
        <dbReference type="ChEBI" id="CHEBI:33723"/>
        <dbReference type="ChEBI" id="CHEBI:47402"/>
        <dbReference type="ChEBI" id="CHEBI:57540"/>
        <dbReference type="ChEBI" id="CHEBI:57945"/>
        <dbReference type="ChEBI" id="CHEBI:83228"/>
    </reaction>
</comment>
<comment type="cofactor">
    <cofactor evidence="1">
        <name>Fe(2+)</name>
        <dbReference type="ChEBI" id="CHEBI:29033"/>
    </cofactor>
</comment>
<comment type="pathway">
    <text evidence="4">Protein modification; peptidyl-diphthamide biosynthesis.</text>
</comment>
<comment type="subunit">
    <text evidence="1 2">Component of the 2-(3-amino-3-carboxypropyl)histidine synthase complex composed of DPH1, DPH2, DPH3 and a NADH-dependent reductase (By similarity). Interacts with SERGEF (By similarity).</text>
</comment>
<comment type="subcellular location">
    <subcellularLocation>
        <location evidence="2">Cytoplasm</location>
    </subcellularLocation>
    <subcellularLocation>
        <location evidence="2">Nucleus</location>
    </subcellularLocation>
</comment>
<comment type="domain">
    <text evidence="1">The DPH-type metal-binding (MB) domain can also bind zinc. However, iron is the physiological binding partner as zinc binding impairs the protein electron donor function.</text>
</comment>
<comment type="similarity">
    <text evidence="4">Belongs to the DPH3 family.</text>
</comment>
<keyword id="KW-0963">Cytoplasm</keyword>
<keyword id="KW-0408">Iron</keyword>
<keyword id="KW-0479">Metal-binding</keyword>
<keyword id="KW-0539">Nucleus</keyword>
<keyword id="KW-1185">Reference proteome</keyword>
<gene>
    <name type="primary">DPH3</name>
    <name type="synonym">ZCSL2</name>
</gene>
<dbReference type="EMBL" id="BC116080">
    <property type="protein sequence ID" value="AAI16081.1"/>
    <property type="molecule type" value="mRNA"/>
</dbReference>
<dbReference type="RefSeq" id="NP_001106770.1">
    <property type="nucleotide sequence ID" value="NM_001113299.2"/>
</dbReference>
<dbReference type="RefSeq" id="NP_001290470.1">
    <property type="nucleotide sequence ID" value="NM_001303541.1"/>
</dbReference>
<dbReference type="SMR" id="Q1LZC9"/>
<dbReference type="FunCoup" id="Q1LZC9">
    <property type="interactions" value="2494"/>
</dbReference>
<dbReference type="STRING" id="9913.ENSBTAP00000065833"/>
<dbReference type="PaxDb" id="9913-ENSBTAP00000005113"/>
<dbReference type="GeneID" id="511579"/>
<dbReference type="KEGG" id="bta:511579"/>
<dbReference type="CTD" id="285381"/>
<dbReference type="VEuPathDB" id="HostDB:ENSBTAG00000003916"/>
<dbReference type="eggNOG" id="KOG2923">
    <property type="taxonomic scope" value="Eukaryota"/>
</dbReference>
<dbReference type="HOGENOM" id="CLU_155991_3_0_1"/>
<dbReference type="InParanoid" id="Q1LZC9"/>
<dbReference type="OMA" id="IYDPDMF"/>
<dbReference type="OrthoDB" id="66964at2759"/>
<dbReference type="TreeFam" id="TF315102"/>
<dbReference type="Reactome" id="R-BTA-5358493">
    <property type="pathway name" value="Synthesis of diphthamide-EEF2"/>
</dbReference>
<dbReference type="UniPathway" id="UPA00559"/>
<dbReference type="Proteomes" id="UP000009136">
    <property type="component" value="Chromosome 1"/>
</dbReference>
<dbReference type="Bgee" id="ENSBTAG00000003916">
    <property type="expression patterns" value="Expressed in semitendinosus and 102 other cell types or tissues"/>
</dbReference>
<dbReference type="GO" id="GO:0005829">
    <property type="term" value="C:cytosol"/>
    <property type="evidence" value="ECO:0007669"/>
    <property type="project" value="Ensembl"/>
</dbReference>
<dbReference type="GO" id="GO:0005654">
    <property type="term" value="C:nucleoplasm"/>
    <property type="evidence" value="ECO:0007669"/>
    <property type="project" value="Ensembl"/>
</dbReference>
<dbReference type="GO" id="GO:0032991">
    <property type="term" value="C:protein-containing complex"/>
    <property type="evidence" value="ECO:0007669"/>
    <property type="project" value="Ensembl"/>
</dbReference>
<dbReference type="GO" id="GO:0008198">
    <property type="term" value="F:ferrous iron binding"/>
    <property type="evidence" value="ECO:0000250"/>
    <property type="project" value="UniProtKB"/>
</dbReference>
<dbReference type="GO" id="GO:0034986">
    <property type="term" value="F:iron chaperone activity"/>
    <property type="evidence" value="ECO:0000250"/>
    <property type="project" value="UniProtKB"/>
</dbReference>
<dbReference type="GO" id="GO:0050709">
    <property type="term" value="P:negative regulation of protein secretion"/>
    <property type="evidence" value="ECO:0007669"/>
    <property type="project" value="Ensembl"/>
</dbReference>
<dbReference type="GO" id="GO:0017183">
    <property type="term" value="P:protein histidyl modification to diphthamide"/>
    <property type="evidence" value="ECO:0000250"/>
    <property type="project" value="UniProtKB"/>
</dbReference>
<dbReference type="GO" id="GO:0002926">
    <property type="term" value="P:tRNA wobble base 5-methoxycarbonylmethyl-2-thiouridinylation"/>
    <property type="evidence" value="ECO:0000250"/>
    <property type="project" value="UniProtKB"/>
</dbReference>
<dbReference type="FunFam" id="3.10.660.10:FF:000001">
    <property type="entry name" value="Diphthamide biosynthesis 3"/>
    <property type="match status" value="1"/>
</dbReference>
<dbReference type="Gene3D" id="3.10.660.10">
    <property type="entry name" value="DPH Zinc finger"/>
    <property type="match status" value="1"/>
</dbReference>
<dbReference type="InterPro" id="IPR044248">
    <property type="entry name" value="DPH3/4-like"/>
</dbReference>
<dbReference type="InterPro" id="IPR007872">
    <property type="entry name" value="DPH_MB_dom"/>
</dbReference>
<dbReference type="InterPro" id="IPR036671">
    <property type="entry name" value="DPH_MB_sf"/>
</dbReference>
<dbReference type="PANTHER" id="PTHR21454:SF31">
    <property type="entry name" value="DIPHTHAMIDE BIOSYNTHESIS PROTEIN 3"/>
    <property type="match status" value="1"/>
</dbReference>
<dbReference type="PANTHER" id="PTHR21454">
    <property type="entry name" value="DPH3 HOMOLOG-RELATED"/>
    <property type="match status" value="1"/>
</dbReference>
<dbReference type="Pfam" id="PF05207">
    <property type="entry name" value="Zn_ribbon_CSL"/>
    <property type="match status" value="1"/>
</dbReference>
<dbReference type="SUPFAM" id="SSF144217">
    <property type="entry name" value="CSL zinc finger"/>
    <property type="match status" value="1"/>
</dbReference>
<dbReference type="PROSITE" id="PS51074">
    <property type="entry name" value="DPH_MB"/>
    <property type="match status" value="1"/>
</dbReference>
<evidence type="ECO:0000250" key="1">
    <source>
        <dbReference type="UniProtKB" id="Q3E840"/>
    </source>
</evidence>
<evidence type="ECO:0000250" key="2">
    <source>
        <dbReference type="UniProtKB" id="Q96FX2"/>
    </source>
</evidence>
<evidence type="ECO:0000255" key="3">
    <source>
        <dbReference type="PROSITE-ProRule" id="PRU00456"/>
    </source>
</evidence>
<evidence type="ECO:0000305" key="4"/>
<protein>
    <recommendedName>
        <fullName evidence="4">Diphthamide biosynthesis protein 3</fullName>
    </recommendedName>
    <alternativeName>
        <fullName>CSL-type zinc finger-containing protein 2</fullName>
    </alternativeName>
</protein>
<feature type="chain" id="PRO_0000260220" description="Diphthamide biosynthesis protein 3">
    <location>
        <begin position="1"/>
        <end position="82"/>
    </location>
</feature>
<feature type="domain" description="DPH-type MB" evidence="3">
    <location>
        <begin position="4"/>
        <end position="60"/>
    </location>
</feature>
<feature type="binding site" evidence="2">
    <location>
        <position position="26"/>
    </location>
    <ligand>
        <name>Fe cation</name>
        <dbReference type="ChEBI" id="CHEBI:24875"/>
    </ligand>
</feature>
<feature type="binding site" evidence="2">
    <location>
        <position position="28"/>
    </location>
    <ligand>
        <name>Fe cation</name>
        <dbReference type="ChEBI" id="CHEBI:24875"/>
    </ligand>
</feature>
<feature type="binding site" evidence="2">
    <location>
        <position position="48"/>
    </location>
    <ligand>
        <name>Fe cation</name>
        <dbReference type="ChEBI" id="CHEBI:24875"/>
    </ligand>
</feature>
<feature type="binding site" evidence="2">
    <location>
        <position position="51"/>
    </location>
    <ligand>
        <name>Fe cation</name>
        <dbReference type="ChEBI" id="CHEBI:24875"/>
    </ligand>
</feature>
<name>DPH3_BOVIN</name>
<sequence>MAVFHDEVEIEDFQYDEDSETYFYPCPCGDNFCITKEDLENGEDVATCPSCSLIIKVIYDKDQFTCGETVPAPSTNKELVKC</sequence>
<reference key="1">
    <citation type="submission" date="2006-05" db="EMBL/GenBank/DDBJ databases">
        <authorList>
            <consortium name="NIH - Mammalian Gene Collection (MGC) project"/>
        </authorList>
    </citation>
    <scope>NUCLEOTIDE SEQUENCE [LARGE SCALE MRNA]</scope>
    <source>
        <strain>Hereford</strain>
        <tissue>Ascending colon</tissue>
    </source>
</reference>